<accession>C9JFL3</accession>
<gene>
    <name type="primary">PHGR1</name>
</gene>
<protein>
    <recommendedName>
        <fullName>Proline, histidine and glycine-rich protein 1</fullName>
    </recommendedName>
</protein>
<dbReference type="EMBL" id="AC013356">
    <property type="status" value="NOT_ANNOTATED_CDS"/>
    <property type="molecule type" value="Genomic_DNA"/>
</dbReference>
<dbReference type="EMBL" id="BC061640">
    <property type="status" value="NOT_ANNOTATED_CDS"/>
    <property type="molecule type" value="mRNA"/>
</dbReference>
<dbReference type="EMBL" id="BC070498">
    <property type="status" value="NOT_ANNOTATED_CDS"/>
    <property type="molecule type" value="mRNA"/>
</dbReference>
<dbReference type="EMBL" id="BC109367">
    <property type="status" value="NOT_ANNOTATED_CDS"/>
    <property type="molecule type" value="mRNA"/>
</dbReference>
<dbReference type="CCDS" id="CCDS45225.1"/>
<dbReference type="RefSeq" id="NP_001139115.1">
    <property type="nucleotide sequence ID" value="NM_001145643.2"/>
</dbReference>
<dbReference type="STRING" id="9606.ENSP00000410024"/>
<dbReference type="BioMuta" id="PHGR1"/>
<dbReference type="MassIVE" id="C9JFL3"/>
<dbReference type="PaxDb" id="9606-ENSP00000410024"/>
<dbReference type="PeptideAtlas" id="C9JFL3"/>
<dbReference type="Antibodypedia" id="76991">
    <property type="antibodies" value="5 antibodies from 5 providers"/>
</dbReference>
<dbReference type="Ensembl" id="ENST00000448599.2">
    <property type="protein sequence ID" value="ENSP00000410024.2"/>
    <property type="gene ID" value="ENSG00000233041.8"/>
</dbReference>
<dbReference type="GeneID" id="644844"/>
<dbReference type="KEGG" id="hsa:644844"/>
<dbReference type="MANE-Select" id="ENST00000448599.2">
    <property type="protein sequence ID" value="ENSP00000410024.2"/>
    <property type="RefSeq nucleotide sequence ID" value="NM_001145643.2"/>
    <property type="RefSeq protein sequence ID" value="NP_001139115.1"/>
</dbReference>
<dbReference type="UCSC" id="uc059hrl.1">
    <property type="organism name" value="human"/>
</dbReference>
<dbReference type="AGR" id="HGNC:37226"/>
<dbReference type="CTD" id="644844"/>
<dbReference type="DisGeNET" id="644844"/>
<dbReference type="GeneCards" id="PHGR1"/>
<dbReference type="HGNC" id="HGNC:37226">
    <property type="gene designation" value="PHGR1"/>
</dbReference>
<dbReference type="HPA" id="ENSG00000233041">
    <property type="expression patterns" value="Tissue enriched (intestine)"/>
</dbReference>
<dbReference type="neXtProt" id="NX_C9JFL3"/>
<dbReference type="OpenTargets" id="ENSG00000233041"/>
<dbReference type="PharmGKB" id="PA165479224"/>
<dbReference type="VEuPathDB" id="HostDB:ENSG00000233041"/>
<dbReference type="eggNOG" id="ENOG502TETH">
    <property type="taxonomic scope" value="Eukaryota"/>
</dbReference>
<dbReference type="GeneTree" id="ENSGT00840000132153"/>
<dbReference type="HOGENOM" id="CLU_2764565_0_0_1"/>
<dbReference type="InParanoid" id="C9JFL3"/>
<dbReference type="OMA" id="AHGPGHC"/>
<dbReference type="PAN-GO" id="C9JFL3">
    <property type="GO annotations" value="0 GO annotations based on evolutionary models"/>
</dbReference>
<dbReference type="PathwayCommons" id="C9JFL3"/>
<dbReference type="SignaLink" id="C9JFL3"/>
<dbReference type="BioGRID-ORCS" id="644844">
    <property type="hits" value="80 hits in 1129 CRISPR screens"/>
</dbReference>
<dbReference type="GenomeRNAi" id="644844"/>
<dbReference type="Pharos" id="C9JFL3">
    <property type="development level" value="Tdark"/>
</dbReference>
<dbReference type="PRO" id="PR:C9JFL3"/>
<dbReference type="Proteomes" id="UP000005640">
    <property type="component" value="Chromosome 15"/>
</dbReference>
<dbReference type="RNAct" id="C9JFL3">
    <property type="molecule type" value="protein"/>
</dbReference>
<dbReference type="Bgee" id="ENSG00000233041">
    <property type="expression patterns" value="Expressed in mucosa of transverse colon and 83 other cell types or tissues"/>
</dbReference>
<dbReference type="ExpressionAtlas" id="C9JFL3">
    <property type="expression patterns" value="baseline and differential"/>
</dbReference>
<evidence type="ECO:0000256" key="1">
    <source>
        <dbReference type="SAM" id="MobiDB-lite"/>
    </source>
</evidence>
<reference key="1">
    <citation type="journal article" date="2006" name="Nature">
        <title>Analysis of the DNA sequence and duplication history of human chromosome 15.</title>
        <authorList>
            <person name="Zody M.C."/>
            <person name="Garber M."/>
            <person name="Sharpe T."/>
            <person name="Young S.K."/>
            <person name="Rowen L."/>
            <person name="O'Neill K."/>
            <person name="Whittaker C.A."/>
            <person name="Kamal M."/>
            <person name="Chang J.L."/>
            <person name="Cuomo C.A."/>
            <person name="Dewar K."/>
            <person name="FitzGerald M.G."/>
            <person name="Kodira C.D."/>
            <person name="Madan A."/>
            <person name="Qin S."/>
            <person name="Yang X."/>
            <person name="Abbasi N."/>
            <person name="Abouelleil A."/>
            <person name="Arachchi H.M."/>
            <person name="Baradarani L."/>
            <person name="Birditt B."/>
            <person name="Bloom S."/>
            <person name="Bloom T."/>
            <person name="Borowsky M.L."/>
            <person name="Burke J."/>
            <person name="Butler J."/>
            <person name="Cook A."/>
            <person name="DeArellano K."/>
            <person name="DeCaprio D."/>
            <person name="Dorris L. III"/>
            <person name="Dors M."/>
            <person name="Eichler E.E."/>
            <person name="Engels R."/>
            <person name="Fahey J."/>
            <person name="Fleetwood P."/>
            <person name="Friedman C."/>
            <person name="Gearin G."/>
            <person name="Hall J.L."/>
            <person name="Hensley G."/>
            <person name="Johnson E."/>
            <person name="Jones C."/>
            <person name="Kamat A."/>
            <person name="Kaur A."/>
            <person name="Locke D.P."/>
            <person name="Madan A."/>
            <person name="Munson G."/>
            <person name="Jaffe D.B."/>
            <person name="Lui A."/>
            <person name="Macdonald P."/>
            <person name="Mauceli E."/>
            <person name="Naylor J.W."/>
            <person name="Nesbitt R."/>
            <person name="Nicol R."/>
            <person name="O'Leary S.B."/>
            <person name="Ratcliffe A."/>
            <person name="Rounsley S."/>
            <person name="She X."/>
            <person name="Sneddon K.M.B."/>
            <person name="Stewart S."/>
            <person name="Sougnez C."/>
            <person name="Stone S.M."/>
            <person name="Topham K."/>
            <person name="Vincent D."/>
            <person name="Wang S."/>
            <person name="Zimmer A.R."/>
            <person name="Birren B.W."/>
            <person name="Hood L."/>
            <person name="Lander E.S."/>
            <person name="Nusbaum C."/>
        </authorList>
    </citation>
    <scope>NUCLEOTIDE SEQUENCE [LARGE SCALE GENOMIC DNA]</scope>
</reference>
<reference key="2">
    <citation type="journal article" date="2004" name="Genome Res.">
        <title>The status, quality, and expansion of the NIH full-length cDNA project: the Mammalian Gene Collection (MGC).</title>
        <authorList>
            <consortium name="The MGC Project Team"/>
        </authorList>
    </citation>
    <scope>NUCLEOTIDE SEQUENCE [LARGE SCALE MRNA]</scope>
</reference>
<sequence>MDPGPKGHCHCGGHGHPPGHCGPPPGHGPGPCGPPPHHGPGPCGPPPGHGPGPCGPPPHHGPGPCGPPPGHGPGHPPPGPHH</sequence>
<keyword id="KW-1267">Proteomics identification</keyword>
<keyword id="KW-1185">Reference proteome</keyword>
<proteinExistence type="evidence at protein level"/>
<name>PHGR1_HUMAN</name>
<organism>
    <name type="scientific">Homo sapiens</name>
    <name type="common">Human</name>
    <dbReference type="NCBI Taxonomy" id="9606"/>
    <lineage>
        <taxon>Eukaryota</taxon>
        <taxon>Metazoa</taxon>
        <taxon>Chordata</taxon>
        <taxon>Craniata</taxon>
        <taxon>Vertebrata</taxon>
        <taxon>Euteleostomi</taxon>
        <taxon>Mammalia</taxon>
        <taxon>Eutheria</taxon>
        <taxon>Euarchontoglires</taxon>
        <taxon>Primates</taxon>
        <taxon>Haplorrhini</taxon>
        <taxon>Catarrhini</taxon>
        <taxon>Hominidae</taxon>
        <taxon>Homo</taxon>
    </lineage>
</organism>
<feature type="chain" id="PRO_0000395029" description="Proline, histidine and glycine-rich protein 1">
    <location>
        <begin position="1"/>
        <end position="82"/>
    </location>
</feature>
<feature type="region of interest" description="Disordered" evidence="1">
    <location>
        <begin position="20"/>
        <end position="82"/>
    </location>
</feature>